<evidence type="ECO:0000250" key="1">
    <source>
        <dbReference type="UniProtKB" id="A0A5R8T042"/>
    </source>
</evidence>
<evidence type="ECO:0000250" key="2">
    <source>
        <dbReference type="UniProtKB" id="P9WKD3"/>
    </source>
</evidence>
<evidence type="ECO:0000255" key="3">
    <source>
        <dbReference type="PROSITE-ProRule" id="PRU10101"/>
    </source>
</evidence>
<evidence type="ECO:0000269" key="4">
    <source>
    </source>
</evidence>
<evidence type="ECO:0000269" key="5">
    <source>
    </source>
</evidence>
<evidence type="ECO:0000269" key="6">
    <source>
    </source>
</evidence>
<evidence type="ECO:0000269" key="7">
    <source>
    </source>
</evidence>
<evidence type="ECO:0000269" key="8">
    <source>
    </source>
</evidence>
<evidence type="ECO:0000303" key="9">
    <source>
    </source>
</evidence>
<evidence type="ECO:0000303" key="10">
    <source>
    </source>
</evidence>
<evidence type="ECO:0000303" key="11">
    <source>
    </source>
</evidence>
<evidence type="ECO:0000305" key="12"/>
<evidence type="ECO:0000312" key="13">
    <source>
        <dbReference type="EMBL" id="CAA63262.1"/>
    </source>
</evidence>
<evidence type="ECO:0007829" key="14">
    <source>
        <dbReference type="PDB" id="7U48"/>
    </source>
</evidence>
<evidence type="ECO:0007829" key="15">
    <source>
        <dbReference type="PDB" id="7U4B"/>
    </source>
</evidence>
<dbReference type="EC" id="3.5.2.6" evidence="5 6 8"/>
<dbReference type="EMBL" id="X92506">
    <property type="protein sequence ID" value="CAA63262.1"/>
    <property type="molecule type" value="Genomic_DNA"/>
</dbReference>
<dbReference type="PIR" id="S23929">
    <property type="entry name" value="S23929"/>
</dbReference>
<dbReference type="RefSeq" id="YP_006954479.1">
    <property type="nucleotide sequence ID" value="NC_019098.1"/>
</dbReference>
<dbReference type="RefSeq" id="YP_008995260.1">
    <property type="nucleotide sequence ID" value="NC_023277.2"/>
</dbReference>
<dbReference type="RefSeq" id="YP_008997418.1">
    <property type="nucleotide sequence ID" value="NC_023289.2"/>
</dbReference>
<dbReference type="RefSeq" id="YP_008998816.1">
    <property type="nucleotide sequence ID" value="NC_023329.1"/>
</dbReference>
<dbReference type="RefSeq" id="YP_009061062.1">
    <property type="nucleotide sequence ID" value="NC_024974.1"/>
</dbReference>
<dbReference type="RefSeq" id="YP_009061420.1">
    <property type="nucleotide sequence ID" value="NC_024978.1"/>
</dbReference>
<dbReference type="RefSeq" id="YP_009061643.1">
    <property type="nucleotide sequence ID" value="NC_024979.1"/>
</dbReference>
<dbReference type="RefSeq" id="YP_009061676.1">
    <property type="nucleotide sequence ID" value="NC_024980.1"/>
</dbReference>
<dbReference type="RefSeq" id="YP_009068156.1">
    <property type="nucleotide sequence ID" value="NC_025138.1"/>
</dbReference>
<dbReference type="RefSeq" id="YP_009068457.1">
    <property type="nucleotide sequence ID" value="NC_025140.1"/>
</dbReference>
<dbReference type="RefSeq" id="YP_009068512.1">
    <property type="nucleotide sequence ID" value="NC_025141.1"/>
</dbReference>
<dbReference type="RefSeq" id="YP_009068695.1">
    <property type="nucleotide sequence ID" value="NC_025142.1"/>
</dbReference>
<dbReference type="RefSeq" id="YP_009068890.1">
    <property type="nucleotide sequence ID" value="NC_025143.1"/>
</dbReference>
<dbReference type="RefSeq" id="YP_009069013.1">
    <property type="nucleotide sequence ID" value="NC_025144.1"/>
</dbReference>
<dbReference type="RefSeq" id="YP_009070899.1">
    <property type="nucleotide sequence ID" value="NC_025176.1"/>
</dbReference>
<dbReference type="RefSeq" id="YP_009328600.1">
    <property type="nucleotide sequence ID" value="NC_032100.1"/>
</dbReference>
<dbReference type="PDB" id="7U48">
    <property type="method" value="X-ray"/>
    <property type="resolution" value="1.67 A"/>
    <property type="chains" value="A/B/C=1-291"/>
</dbReference>
<dbReference type="PDB" id="7U49">
    <property type="method" value="X-ray"/>
    <property type="resolution" value="1.72 A"/>
    <property type="chains" value="A/B/C=1-291"/>
</dbReference>
<dbReference type="PDB" id="7U4B">
    <property type="method" value="X-ray"/>
    <property type="resolution" value="1.92 A"/>
    <property type="chains" value="A/B/C=1-290"/>
</dbReference>
<dbReference type="PDB" id="7U57">
    <property type="method" value="X-ray"/>
    <property type="resolution" value="2.37 A"/>
    <property type="chains" value="A/B/C=1-291"/>
</dbReference>
<dbReference type="PDBsum" id="7U48"/>
<dbReference type="PDBsum" id="7U49"/>
<dbReference type="PDBsum" id="7U4B"/>
<dbReference type="PDBsum" id="7U57"/>
<dbReference type="SMR" id="P28585"/>
<dbReference type="BindingDB" id="P28585"/>
<dbReference type="CARD" id="ARO:3001864">
    <property type="molecule name" value="CTX-M-1"/>
    <property type="mechanism identifier" value="ARO:0001004"/>
    <property type="mechanism name" value="antibiotic inactivation"/>
</dbReference>
<dbReference type="KEGG" id="ag:CAA63262"/>
<dbReference type="BRENDA" id="3.5.2.6">
    <property type="organism ID" value="2026"/>
</dbReference>
<dbReference type="GO" id="GO:0005576">
    <property type="term" value="C:extracellular region"/>
    <property type="evidence" value="ECO:0007669"/>
    <property type="project" value="UniProtKB-SubCell"/>
</dbReference>
<dbReference type="GO" id="GO:0008800">
    <property type="term" value="F:beta-lactamase activity"/>
    <property type="evidence" value="ECO:0000314"/>
    <property type="project" value="UniProtKB"/>
</dbReference>
<dbReference type="GO" id="GO:0030655">
    <property type="term" value="P:beta-lactam antibiotic catabolic process"/>
    <property type="evidence" value="ECO:0000314"/>
    <property type="project" value="UniProtKB"/>
</dbReference>
<dbReference type="GO" id="GO:0046677">
    <property type="term" value="P:response to antibiotic"/>
    <property type="evidence" value="ECO:0000314"/>
    <property type="project" value="UniProtKB"/>
</dbReference>
<dbReference type="Gene3D" id="3.40.710.10">
    <property type="entry name" value="DD-peptidase/beta-lactamase superfamily"/>
    <property type="match status" value="1"/>
</dbReference>
<dbReference type="InterPro" id="IPR012338">
    <property type="entry name" value="Beta-lactam/transpept-like"/>
</dbReference>
<dbReference type="InterPro" id="IPR045155">
    <property type="entry name" value="Beta-lactam_cat"/>
</dbReference>
<dbReference type="InterPro" id="IPR000871">
    <property type="entry name" value="Beta-lactam_class-A"/>
</dbReference>
<dbReference type="InterPro" id="IPR023650">
    <property type="entry name" value="Beta-lactam_class-A_AS"/>
</dbReference>
<dbReference type="NCBIfam" id="NF033103">
    <property type="entry name" value="bla_class_A"/>
    <property type="match status" value="1"/>
</dbReference>
<dbReference type="NCBIfam" id="NF033089">
    <property type="entry name" value="blaCTX-M"/>
    <property type="match status" value="1"/>
</dbReference>
<dbReference type="PANTHER" id="PTHR35333">
    <property type="entry name" value="BETA-LACTAMASE"/>
    <property type="match status" value="1"/>
</dbReference>
<dbReference type="PANTHER" id="PTHR35333:SF3">
    <property type="entry name" value="BETA-LACTAMASE-TYPE TRANSPEPTIDASE FOLD CONTAINING PROTEIN"/>
    <property type="match status" value="1"/>
</dbReference>
<dbReference type="Pfam" id="PF13354">
    <property type="entry name" value="Beta-lactamase2"/>
    <property type="match status" value="1"/>
</dbReference>
<dbReference type="PRINTS" id="PR00118">
    <property type="entry name" value="BLACTAMASEA"/>
</dbReference>
<dbReference type="SUPFAM" id="SSF56601">
    <property type="entry name" value="beta-lactamase/transpeptidase-like"/>
    <property type="match status" value="1"/>
</dbReference>
<dbReference type="PROSITE" id="PS00146">
    <property type="entry name" value="BETA_LACTAMASE_A"/>
    <property type="match status" value="1"/>
</dbReference>
<comment type="function">
    <text evidence="4 5 6 8">Extended-spectrum beta-lactamase (ESBL) which confers resistance to penicillins, as well as first, second and third-generation cephalosporins (PubMed:15155242, PubMed:1633193, PubMed:18281307, PubMed:21730121). Has cefotaxime-hydrolyzing activity (PubMed:1633193, PubMed:18281307, PubMed:21730121). Inactive against the cephamycin antibiotic, cefoxitin, or against the carbapenem, imipenem (PubMed:1633193, PubMed:18281307).</text>
</comment>
<comment type="catalytic activity">
    <reaction evidence="3 5 6 8">
        <text>a beta-lactam + H2O = a substituted beta-amino acid</text>
        <dbReference type="Rhea" id="RHEA:20401"/>
        <dbReference type="ChEBI" id="CHEBI:15377"/>
        <dbReference type="ChEBI" id="CHEBI:35627"/>
        <dbReference type="ChEBI" id="CHEBI:140347"/>
        <dbReference type="EC" id="3.5.2.6"/>
    </reaction>
</comment>
<comment type="activity regulation">
    <text evidence="6">Inhibited by the beta-lactamase-blocking agent clavulanic acid; in the TG1 strain.</text>
</comment>
<comment type="biophysicochemical properties">
    <kinetics>
        <KM evidence="5">10 uM for ampicillin (at pH 7.0 and 37 degrees Celsius)</KM>
        <KM evidence="8">27 uM for ampicillin (at 30 degrees Celsius)</KM>
        <KM evidence="8">20 uM for nitrocefin (at 30 degrees Celsius)</KM>
        <KM evidence="5">11 uM for benzylpenicillin (at pH 7.0 and 37 degrees Celsius)</KM>
        <KM evidence="5">12 uM for ticarcillin (at pH 7.0 and 37 degrees Celsius)</KM>
        <KM evidence="5">16 uM for cefodizime (at pH 7.0 and 37 degrees Celsius)</KM>
        <KM evidence="5">35 uM for ceftriaxone (at pH 7.0 and 37 degrees Celsius)</KM>
        <KM evidence="5">50 uM for ceftazidime (at pH 7.0 and 37 degrees Celsius)</KM>
        <KM evidence="5">75 uM for cefuroxime (at pH 7.0 and 37 degrees Celsius)</KM>
        <KM evidence="8">18 uM for cefuroxime (at 30 degrees Celsius)</KM>
        <KM evidence="5">115 uM for cefalotin (at pH 7.0 and 37 degrees Celsius)</KM>
        <KM evidence="6">433 uM for cefalotin (at 25 degrees Celsius)</KM>
        <KM evidence="8">136 uM for cefalotin (at 30 degrees Celsius)</KM>
        <KM evidence="5">125 uM for cefotaxime (at pH 7.0 and 37 degrees Celsius)</KM>
        <KM evidence="6">157 uM for cefotaxime (at 25 degrees Celsius)</KM>
        <KM evidence="8">130 uM for cefotaxime (at 30 degrees Celsius)</KM>
        <KM evidence="5">270 uM for cefpirome (at pH 7.0 and 37 degrees Celsius)</KM>
        <text evidence="5 6 8">kcat is 87 sec(-1) with ampicillin as substrate (at pH 7.0 and 37 degrees Celsius) (PubMed:1633193). kcat is 94 sec(-1) with ampicillin as substrate (at 30 degrees Celsius) (PubMed:21730121). kcat is 508 sec(-1) with nitrocefin as substrate (at 30 degrees Celsius) (PubMed:21730121). kcat is 190 sec(-1) with benzylpenicillin as substrate (at pH 7.0 and 37 degrees Celsius) (PubMed:1633193). kcat is 15 sec(-1) with ticarcillin as substrate (at pH 7.0 and 37 degrees Celsius) (PubMed:1633193). kcat is 2450 sec(-1) with cefalotin as substrate (at pH 7.0 and 37 degrees Celsius) (PubMed:1633193). kcat is 1190 sec(-1) with cefalotin as substrate (at 25 degrees Celsius) (PubMed:18281307). kcat is 646 sec(-1) with cefalotin as substrate (at 30 degrees Celsius) (PubMed:21730121). kcat is 150 sec(-1) with cefuroxime as substrate (at pH 7.0 and 37 degrees Celsius) (PubMed:1633193). kcat is 507 sec(-1) with cefuroxime as substrate (at 30 degrees Celsius) (PubMed:21730121). kcat is 317 sec(-1) with cefotaxime as substrate (at pH 7.0 and 37 degrees Celsius) (PubMed:1633193). kcat is 140 sec(-1) with cefotaxime as substrate (at 25 degrees Celsius) (PubMed:18281307). kcat is 1141 sec(-1) with cefotaxime as substrate (at 30 degrees Celsius) (PubMed:21730121). kcat is 516 sec(-1) with cefpirome as substrate (at pH 7.0 and 37 degrees Celsius) (PubMed:1633193). kcat is 78 sec(-1) with cefodizime as substrate (at pH 7.0 and 37 degrees Celsius) (PubMed:1633193). kcat is 156 sec(-1) with ceftriaxone as substrate (at pH 7.0 and 37 degrees Celsius) (PubMed:1633193). kcat is 1 sec(-1) with ceftazidime as substrate (at pH 7.0 and 37 degrees Celsius) (PubMed:1633193).</text>
    </kinetics>
</comment>
<comment type="subunit">
    <text evidence="2">Monomer.</text>
</comment>
<comment type="subcellular location">
    <subcellularLocation>
        <location evidence="1">Secreted</location>
    </subcellularLocation>
</comment>
<comment type="miscellaneous">
    <text evidence="7">The class A beta-lactamase family has a specific amino-acid numbering system, sometimes called Ambler or ABL numbering and often misspelt as Amber (PubMed:2039479). A multiple sequence alignment was used to derive a consensus sequence and then the consensus was numbered taking into account insertions and deletions (PubMed:2039479). This allows use of identical numbers, e.g. for active site residues, despite differences in protein length (PubMed:2039479). UniProt always uses natural numbering of residues, hence there appear to be differences in numbering between this entry and some papers (PubMed:2039479).</text>
</comment>
<comment type="similarity">
    <text evidence="12">Belongs to the class-A beta-lactamase family.</text>
</comment>
<feature type="signal peptide" evidence="5">
    <location>
        <begin position="1"/>
        <end position="28"/>
    </location>
</feature>
<feature type="chain" id="PRO_0000016989" description="Beta-lactamase CTX-M-1">
    <location>
        <begin position="29"/>
        <end position="291"/>
    </location>
</feature>
<feature type="active site" description="Nucleophile; acyl-ester intermediate" evidence="1 3">
    <location>
        <position position="73"/>
    </location>
</feature>
<feature type="active site" description="Proton acceptor" evidence="2">
    <location>
        <position position="169"/>
    </location>
</feature>
<feature type="binding site" evidence="1">
    <location>
        <position position="76"/>
    </location>
    <ligand>
        <name>a beta-lactam</name>
        <dbReference type="ChEBI" id="CHEBI:35627"/>
    </ligand>
</feature>
<feature type="binding site" evidence="1">
    <location>
        <position position="133"/>
    </location>
    <ligand>
        <name>a beta-lactam</name>
        <dbReference type="ChEBI" id="CHEBI:35627"/>
    </ligand>
</feature>
<feature type="binding site" evidence="1">
    <location>
        <position position="169"/>
    </location>
    <ligand>
        <name>a beta-lactam</name>
        <dbReference type="ChEBI" id="CHEBI:35627"/>
    </ligand>
</feature>
<feature type="binding site" evidence="1">
    <location>
        <position position="240"/>
    </location>
    <ligand>
        <name>a beta-lactam</name>
        <dbReference type="ChEBI" id="CHEBI:35627"/>
    </ligand>
</feature>
<feature type="mutagenesis site" description="Significantly reduces catalytic efficiency with respect to cefotaxime." evidence="8">
    <original>T</original>
    <variation>I</variation>
    <location>
        <position position="74"/>
    </location>
</feature>
<feature type="mutagenesis site" description="Significantly reduces catalytic efficiency with respect to cefotaxime." evidence="8">
    <original>V</original>
    <variation>A</variation>
    <location>
        <position position="83"/>
    </location>
</feature>
<feature type="mutagenesis site" description="Significantly reduces catalytic efficiency with respect to cefotaxime." evidence="8">
    <original>V</original>
    <variation>D</variation>
    <location>
        <position position="106"/>
    </location>
</feature>
<feature type="mutagenesis site" description="Significantly reduces catalytic efficiency with respect to cefotaxime." evidence="8">
    <original>N</original>
    <variation>D</variation>
    <location>
        <position position="107"/>
    </location>
</feature>
<feature type="mutagenesis site" description="Significantly reduces catalytic efficiency with respect to cefotaxime." evidence="8">
    <original>N</original>
    <variation>K</variation>
    <location>
        <position position="109"/>
    </location>
</feature>
<feature type="mutagenesis site" description="Significantly reduces catalytic efficiency with respect to cefotaxime." evidence="8">
    <original>P</original>
    <variation>S</variation>
    <location>
        <position position="110"/>
    </location>
</feature>
<feature type="mutagenesis site" description="Significantly reduces catalytic efficiency with respect to cefotaxime." evidence="8">
    <original>M</original>
    <variation>I</variation>
    <location>
        <position position="138"/>
    </location>
</feature>
<feature type="mutagenesis site" description="Significantly reduces catalytic efficiency with respect to cefotaxime." evidence="8">
    <original>R</original>
    <variation>H</variation>
    <location>
        <position position="167"/>
    </location>
</feature>
<feature type="mutagenesis site" description="Significantly reduces catalytic efficiency with respect to cefotaxime." evidence="8">
    <original>R</original>
    <variation>C</variation>
    <location>
        <position position="194"/>
    </location>
</feature>
<feature type="mutagenesis site" description="Reduces catalytic efficiency with respect to cefotaxime." evidence="8">
    <original>A</original>
    <variation>V</variation>
    <location>
        <position position="222"/>
    </location>
</feature>
<feature type="mutagenesis site" description="Increases hydrolytic activity against ceftazidime." evidence="4">
    <original>D</original>
    <variation>G</variation>
    <location>
        <position position="242"/>
    </location>
</feature>
<feature type="mutagenesis site" description="Significantly reduces catalytic efficiency with respect to cefotaxime." evidence="8">
    <original>N</original>
    <variation>D</variation>
    <location>
        <position position="247"/>
    </location>
</feature>
<feature type="mutagenesis site" description="Significantly reduces catalytic efficiency with respect to cefotaxime." evidence="8">
    <original>A</original>
    <variation>S</variation>
    <location>
        <position position="250"/>
    </location>
</feature>
<feature type="mutagenesis site" description="Significantly reduces catalytic efficiency with respect to cefotaxime." evidence="8">
    <original>V</original>
    <variation>L</variation>
    <location>
        <position position="263"/>
    </location>
</feature>
<feature type="mutagenesis site" description="Slightly increases susceptibility of TG1 strain to cefotaxime." evidence="6">
    <original>R</original>
    <variation>N</variation>
    <variation>H</variation>
    <location>
        <position position="276"/>
    </location>
</feature>
<feature type="mutagenesis site" description="Significantly increases susceptibility of TG1 strain to oxyimino-cephalosporins, especially cefotaxime, and to piperacillin. Reduces catalytic efficiency with respect to cefotaxime. No change in resistance to beta-lactamase-blocking agent clavulanic acid in TG1 strain." evidence="6">
    <original>R</original>
    <variation>W</variation>
    <variation>C</variation>
    <variation>G</variation>
    <variation>S</variation>
    <location>
        <position position="276"/>
    </location>
</feature>
<feature type="helix" evidence="14">
    <location>
        <begin position="32"/>
        <end position="44"/>
    </location>
</feature>
<feature type="strand" evidence="14">
    <location>
        <begin position="46"/>
        <end position="54"/>
    </location>
</feature>
<feature type="turn" evidence="14">
    <location>
        <begin position="55"/>
        <end position="57"/>
    </location>
</feature>
<feature type="strand" evidence="14">
    <location>
        <begin position="60"/>
        <end position="64"/>
    </location>
</feature>
<feature type="helix" evidence="14">
    <location>
        <begin position="72"/>
        <end position="74"/>
    </location>
</feature>
<feature type="helix" evidence="14">
    <location>
        <begin position="75"/>
        <end position="87"/>
    </location>
</feature>
<feature type="strand" evidence="14">
    <location>
        <begin position="90"/>
        <end position="92"/>
    </location>
</feature>
<feature type="helix" evidence="15">
    <location>
        <begin position="93"/>
        <end position="95"/>
    </location>
</feature>
<feature type="strand" evidence="14">
    <location>
        <begin position="97"/>
        <end position="99"/>
    </location>
</feature>
<feature type="helix" evidence="14">
    <location>
        <begin position="102"/>
        <end position="104"/>
    </location>
</feature>
<feature type="helix" evidence="14">
    <location>
        <begin position="112"/>
        <end position="115"/>
    </location>
</feature>
<feature type="strand" evidence="14">
    <location>
        <begin position="118"/>
        <end position="121"/>
    </location>
</feature>
<feature type="helix" evidence="14">
    <location>
        <begin position="122"/>
        <end position="132"/>
    </location>
</feature>
<feature type="helix" evidence="14">
    <location>
        <begin position="135"/>
        <end position="145"/>
    </location>
</feature>
<feature type="helix" evidence="14">
    <location>
        <begin position="148"/>
        <end position="157"/>
    </location>
</feature>
<feature type="helix" evidence="14">
    <location>
        <begin position="171"/>
        <end position="173"/>
    </location>
</feature>
<feature type="helix" evidence="14">
    <location>
        <begin position="186"/>
        <end position="197"/>
    </location>
</feature>
<feature type="strand" evidence="14">
    <location>
        <begin position="199"/>
        <end position="202"/>
    </location>
</feature>
<feature type="helix" evidence="14">
    <location>
        <begin position="204"/>
        <end position="215"/>
    </location>
</feature>
<feature type="turn" evidence="14">
    <location>
        <begin position="221"/>
        <end position="223"/>
    </location>
</feature>
<feature type="helix" evidence="14">
    <location>
        <begin position="224"/>
        <end position="227"/>
    </location>
</feature>
<feature type="strand" evidence="14">
    <location>
        <begin position="232"/>
        <end position="241"/>
    </location>
</feature>
<feature type="turn" evidence="14">
    <location>
        <begin position="242"/>
        <end position="244"/>
    </location>
</feature>
<feature type="strand" evidence="14">
    <location>
        <begin position="245"/>
        <end position="253"/>
    </location>
</feature>
<feature type="strand" evidence="14">
    <location>
        <begin position="260"/>
        <end position="267"/>
    </location>
</feature>
<feature type="helix" evidence="14">
    <location>
        <begin position="277"/>
        <end position="288"/>
    </location>
</feature>
<organism evidence="13">
    <name type="scientific">Escherichia coli</name>
    <dbReference type="NCBI Taxonomy" id="562"/>
    <lineage>
        <taxon>Bacteria</taxon>
        <taxon>Pseudomonadati</taxon>
        <taxon>Pseudomonadota</taxon>
        <taxon>Gammaproteobacteria</taxon>
        <taxon>Enterobacterales</taxon>
        <taxon>Enterobacteriaceae</taxon>
        <taxon>Escherichia</taxon>
    </lineage>
</organism>
<keyword id="KW-0002">3D-structure</keyword>
<keyword id="KW-0046">Antibiotic resistance</keyword>
<keyword id="KW-0903">Direct protein sequencing</keyword>
<keyword id="KW-0378">Hydrolase</keyword>
<keyword id="KW-0614">Plasmid</keyword>
<keyword id="KW-0964">Secreted</keyword>
<keyword id="KW-0732">Signal</keyword>
<name>BLC1_ECOLX</name>
<gene>
    <name evidence="11" type="primary">bla</name>
    <name evidence="9" type="synonym">men1</name>
</gene>
<protein>
    <recommendedName>
        <fullName evidence="11">Beta-lactamase CTX-M-1</fullName>
        <ecNumber evidence="5 6 8">3.5.2.6</ecNumber>
    </recommendedName>
    <alternativeName>
        <fullName evidence="9">Beta-lactamase MEN-1</fullName>
    </alternativeName>
    <alternativeName>
        <fullName evidence="11">Cefotaximase 1</fullName>
    </alternativeName>
</protein>
<geneLocation type="plasmid" evidence="13">
    <name>pMVP-3</name>
</geneLocation>
<reference key="1">
    <citation type="journal article" date="1996" name="Antimicrob. Agents Chemother.">
        <title>Sequences of beta-lactamase genes encoding CTX-M-1 (MEN-1) and CTX-M-2 and relationship of their amino acid sequences with those of other beta-lactamases.</title>
        <authorList>
            <person name="Bauernfeind A."/>
            <person name="Stemplinger I."/>
            <person name="Jungwirth R."/>
            <person name="Casellas J.M."/>
        </authorList>
    </citation>
    <scope>NUCLEOTIDE SEQUENCE [GENOMIC DNA]</scope>
    <source>
        <strain>GRI-1</strain>
    </source>
</reference>
<reference key="2">
    <citation type="journal article" date="1992" name="Biochim. Biophys. Acta">
        <title>Close amino acid sequence relationship between the new plasmid-mediated extended-spectrum beta-lactamase MEN-1 and chromosomally encoded enzymes of Klebsiella oxytoca.</title>
        <authorList>
            <person name="Barthelemy M."/>
            <person name="Peduzzi J."/>
            <person name="Bernard H."/>
            <person name="Tancrede C."/>
            <person name="Labia R."/>
        </authorList>
    </citation>
    <scope>PROTEIN SEQUENCE OF 29-291</scope>
    <scope>FUNCTION</scope>
    <scope>CATALYTIC ACTIVITY</scope>
    <scope>BIOPHYSICOCHEMICAL PROPERTIES</scope>
    <source>
        <strain>MEN</strain>
    </source>
</reference>
<reference evidence="12" key="3">
    <citation type="journal article" date="1991" name="Biochem. J.">
        <title>A standard numbering scheme for the class A beta-lactamases.</title>
        <authorList>
            <person name="Ambler R.P."/>
            <person name="Coulson A.F."/>
            <person name="Frere J.M."/>
            <person name="Ghuysen J.M."/>
            <person name="Joris B."/>
            <person name="Forsman M."/>
            <person name="Levesque R.C."/>
            <person name="Tiraby G."/>
            <person name="Waley S.G."/>
        </authorList>
    </citation>
    <scope>NOMENCLATURE</scope>
</reference>
<reference key="4">
    <citation type="journal article" date="2004" name="Antimicrob. Agents Chemother.">
        <title>High-level resistance to ceftazidime conferred by a novel enzyme, CTX-M-32, derived from CTX-M-1 through a single Asp240-Gly substitution.</title>
        <authorList>
            <person name="Cartelle M."/>
            <person name="del mar Tomas M."/>
            <person name="Molina F."/>
            <person name="Moure R."/>
            <person name="Villamueva R."/>
            <person name="Bou G."/>
        </authorList>
    </citation>
    <scope>FUNCTION</scope>
    <scope>MUTAGENESIS OF ASP-242</scope>
</reference>
<reference key="5">
    <citation type="journal article" date="2008" name="J. Antimicrob. Chemother.">
        <title>Structure-function studies of arginine at position 276 in CTX-M beta-lactamases.</title>
        <authorList>
            <person name="Perez-Llarena F.J."/>
            <person name="Cartelle M."/>
            <person name="Mallo S."/>
            <person name="Beceiro A."/>
            <person name="Perez A."/>
            <person name="Villanueva R."/>
            <person name="Romero A."/>
            <person name="Bonnet R."/>
            <person name="Bou G."/>
        </authorList>
    </citation>
    <scope>FUNCTION</scope>
    <scope>CATALYTIC ACTIVITY</scope>
    <scope>ACTIVITY REGULATION</scope>
    <scope>BIOPHYSICOCHEMICAL PROPERTIES</scope>
    <scope>MUTAGENESIS OF ARG-276</scope>
    <source>
        <strain evidence="10">TG1</strain>
    </source>
</reference>
<reference key="6">
    <citation type="journal article" date="2011" name="Antimicrob. Agents Chemother.">
        <title>Distant and new mutations in CTX-M-1 beta-lactamase affect cefotaxime hydrolysis.</title>
        <authorList>
            <person name="Perez-Llarena F.J."/>
            <person name="Kerff F."/>
            <person name="Abian O."/>
            <person name="Mallo S."/>
            <person name="Fernandez M.C."/>
            <person name="Galleni M."/>
            <person name="Sancho J."/>
            <person name="Bou G."/>
        </authorList>
    </citation>
    <scope>FUNCTION</scope>
    <scope>CATALYTIC ACTIVITY</scope>
    <scope>BIOPHYSICOCHEMICAL PROPERTIES</scope>
    <scope>MUTAGENESIS OF THR-74; VAL-83; VAL-106; ASN-107; ASN-109; PRO-110; MET-138; ARG-167; ARG-194; ALA-222; ASN-247; ALA-250 AND VAL-263</scope>
</reference>
<sequence length="291" mass="31246">MVKKSLRQFTLMATATVTLLLGSVPLYAQTADVQQKLAELERQSGGRLGVALINTADNSQILYRADERFAMCSTSKVMAVAAVLKKSESEPNLLNQRVEIKKSDLVNYNPIAEKHVDGTMSLAELSAAALQYSDNVAMNKLISHVGGPASVTAFARQLGDETFRLDRTEPTLNTAIPGDPRDTTSPRAMAQTLRNLTLGKALGDSQRAQLVTWMKGNTTGAASIQAGLPASWVVGDKTGSGDYGTTNDIAVIWPKDRAPLILVTYFTQPQPKAESRRDVLASAAKIVTNGL</sequence>
<proteinExistence type="evidence at protein level"/>
<accession>P28585</accession>